<gene>
    <name type="primary">cbhC</name>
    <name type="ORF">AN5282</name>
</gene>
<dbReference type="EC" id="3.2.1.91"/>
<dbReference type="EMBL" id="DQ490497">
    <property type="protein sequence ID" value="ABF50873.1"/>
    <property type="molecule type" value="mRNA"/>
</dbReference>
<dbReference type="EMBL" id="AACD01000093">
    <property type="protein sequence ID" value="EAA62442.1"/>
    <property type="status" value="ALT_SEQ"/>
    <property type="molecule type" value="Genomic_DNA"/>
</dbReference>
<dbReference type="EMBL" id="BN001305">
    <property type="protein sequence ID" value="CBF82181.1"/>
    <property type="status" value="ALT_SEQ"/>
    <property type="molecule type" value="Genomic_DNA"/>
</dbReference>
<dbReference type="RefSeq" id="XP_662886.1">
    <property type="nucleotide sequence ID" value="XM_657794.1"/>
</dbReference>
<dbReference type="SMR" id="Q5B2E8"/>
<dbReference type="STRING" id="227321.Q5B2E8"/>
<dbReference type="CAZy" id="CBM1">
    <property type="family name" value="Carbohydrate-Binding Module Family 1"/>
</dbReference>
<dbReference type="CAZy" id="GH6">
    <property type="family name" value="Glycoside Hydrolase Family 6"/>
</dbReference>
<dbReference type="KEGG" id="ani:ANIA_05282"/>
<dbReference type="VEuPathDB" id="FungiDB:AN5282"/>
<dbReference type="eggNOG" id="ENOG502QWHE">
    <property type="taxonomic scope" value="Eukaryota"/>
</dbReference>
<dbReference type="HOGENOM" id="CLU_015488_0_0_1"/>
<dbReference type="InParanoid" id="Q5B2E8"/>
<dbReference type="OrthoDB" id="64893at2759"/>
<dbReference type="BRENDA" id="3.2.1.91">
    <property type="organism ID" value="517"/>
</dbReference>
<dbReference type="Proteomes" id="UP000000560">
    <property type="component" value="Chromosome V"/>
</dbReference>
<dbReference type="GO" id="GO:0005576">
    <property type="term" value="C:extracellular region"/>
    <property type="evidence" value="ECO:0007669"/>
    <property type="project" value="UniProtKB-SubCell"/>
</dbReference>
<dbReference type="GO" id="GO:0016162">
    <property type="term" value="F:cellulose 1,4-beta-cellobiosidase activity"/>
    <property type="evidence" value="ECO:0000314"/>
    <property type="project" value="UniProtKB"/>
</dbReference>
<dbReference type="GO" id="GO:0030248">
    <property type="term" value="F:cellulose binding"/>
    <property type="evidence" value="ECO:0007669"/>
    <property type="project" value="InterPro"/>
</dbReference>
<dbReference type="GO" id="GO:0030245">
    <property type="term" value="P:cellulose catabolic process"/>
    <property type="evidence" value="ECO:0007669"/>
    <property type="project" value="UniProtKB-KW"/>
</dbReference>
<dbReference type="GO" id="GO:0009251">
    <property type="term" value="P:glucan catabolic process"/>
    <property type="evidence" value="ECO:0000314"/>
    <property type="project" value="UniProtKB"/>
</dbReference>
<dbReference type="FunFam" id="3.20.20.40:FF:000001">
    <property type="entry name" value="Glucanase"/>
    <property type="match status" value="1"/>
</dbReference>
<dbReference type="Gene3D" id="3.20.20.40">
    <property type="entry name" value="1, 4-beta cellobiohydrolase"/>
    <property type="match status" value="1"/>
</dbReference>
<dbReference type="InterPro" id="IPR016288">
    <property type="entry name" value="Beta_cellobiohydrolase"/>
</dbReference>
<dbReference type="InterPro" id="IPR036434">
    <property type="entry name" value="Beta_cellobiohydrolase_sf"/>
</dbReference>
<dbReference type="InterPro" id="IPR035971">
    <property type="entry name" value="CBD_sf"/>
</dbReference>
<dbReference type="InterPro" id="IPR000254">
    <property type="entry name" value="Cellulose-bd_dom_fun"/>
</dbReference>
<dbReference type="InterPro" id="IPR001524">
    <property type="entry name" value="Glyco_hydro_6_CS"/>
</dbReference>
<dbReference type="PANTHER" id="PTHR34876">
    <property type="match status" value="1"/>
</dbReference>
<dbReference type="PANTHER" id="PTHR34876:SF4">
    <property type="entry name" value="1,4-BETA-D-GLUCAN CELLOBIOHYDROLASE C-RELATED"/>
    <property type="match status" value="1"/>
</dbReference>
<dbReference type="Pfam" id="PF00734">
    <property type="entry name" value="CBM_1"/>
    <property type="match status" value="1"/>
</dbReference>
<dbReference type="Pfam" id="PF01341">
    <property type="entry name" value="Glyco_hydro_6"/>
    <property type="match status" value="1"/>
</dbReference>
<dbReference type="PIRSF" id="PIRSF001100">
    <property type="entry name" value="Beta_cellobiohydrolase"/>
    <property type="match status" value="1"/>
</dbReference>
<dbReference type="PRINTS" id="PR00733">
    <property type="entry name" value="GLHYDRLASE6"/>
</dbReference>
<dbReference type="SMART" id="SM00236">
    <property type="entry name" value="fCBD"/>
    <property type="match status" value="1"/>
</dbReference>
<dbReference type="SUPFAM" id="SSF57180">
    <property type="entry name" value="Cellulose-binding domain"/>
    <property type="match status" value="1"/>
</dbReference>
<dbReference type="SUPFAM" id="SSF51989">
    <property type="entry name" value="Glycosyl hydrolases family 6, cellulases"/>
    <property type="match status" value="1"/>
</dbReference>
<dbReference type="PROSITE" id="PS00562">
    <property type="entry name" value="CBM1_1"/>
    <property type="match status" value="1"/>
</dbReference>
<dbReference type="PROSITE" id="PS51164">
    <property type="entry name" value="CBM1_2"/>
    <property type="match status" value="1"/>
</dbReference>
<dbReference type="PROSITE" id="PS00655">
    <property type="entry name" value="GLYCOSYL_HYDROL_F6_1"/>
    <property type="match status" value="1"/>
</dbReference>
<dbReference type="PROSITE" id="PS00656">
    <property type="entry name" value="GLYCOSYL_HYDROL_F6_2"/>
    <property type="match status" value="1"/>
</dbReference>
<proteinExistence type="evidence at protein level"/>
<reference key="1">
    <citation type="journal article" date="2006" name="Proc. Natl. Acad. Sci. U.S.A.">
        <title>Development and application of a suite of polysaccharide-degrading enzymes for analyzing plant cell walls.</title>
        <authorList>
            <person name="Bauer S."/>
            <person name="Vasu P."/>
            <person name="Persson S."/>
            <person name="Mort A.J."/>
            <person name="Somerville C.R."/>
        </authorList>
    </citation>
    <scope>NUCLEOTIDE SEQUENCE [MRNA]</scope>
    <scope>FUNCTION</scope>
    <scope>BIOPHYSICOCHEMICAL PROPERTIES</scope>
    <source>
        <strain>FGSC A4 / ATCC 38163 / CBS 112.46 / NRRL 194 / M139</strain>
    </source>
</reference>
<reference key="2">
    <citation type="journal article" date="2005" name="Nature">
        <title>Sequencing of Aspergillus nidulans and comparative analysis with A. fumigatus and A. oryzae.</title>
        <authorList>
            <person name="Galagan J.E."/>
            <person name="Calvo S.E."/>
            <person name="Cuomo C."/>
            <person name="Ma L.-J."/>
            <person name="Wortman J.R."/>
            <person name="Batzoglou S."/>
            <person name="Lee S.-I."/>
            <person name="Bastuerkmen M."/>
            <person name="Spevak C.C."/>
            <person name="Clutterbuck J."/>
            <person name="Kapitonov V."/>
            <person name="Jurka J."/>
            <person name="Scazzocchio C."/>
            <person name="Farman M.L."/>
            <person name="Butler J."/>
            <person name="Purcell S."/>
            <person name="Harris S."/>
            <person name="Braus G.H."/>
            <person name="Draht O."/>
            <person name="Busch S."/>
            <person name="D'Enfert C."/>
            <person name="Bouchier C."/>
            <person name="Goldman G.H."/>
            <person name="Bell-Pedersen D."/>
            <person name="Griffiths-Jones S."/>
            <person name="Doonan J.H."/>
            <person name="Yu J."/>
            <person name="Vienken K."/>
            <person name="Pain A."/>
            <person name="Freitag M."/>
            <person name="Selker E.U."/>
            <person name="Archer D.B."/>
            <person name="Penalva M.A."/>
            <person name="Oakley B.R."/>
            <person name="Momany M."/>
            <person name="Tanaka T."/>
            <person name="Kumagai T."/>
            <person name="Asai K."/>
            <person name="Machida M."/>
            <person name="Nierman W.C."/>
            <person name="Denning D.W."/>
            <person name="Caddick M.X."/>
            <person name="Hynes M."/>
            <person name="Paoletti M."/>
            <person name="Fischer R."/>
            <person name="Miller B.L."/>
            <person name="Dyer P.S."/>
            <person name="Sachs M.S."/>
            <person name="Osmani S.A."/>
            <person name="Birren B.W."/>
        </authorList>
    </citation>
    <scope>NUCLEOTIDE SEQUENCE [LARGE SCALE GENOMIC DNA]</scope>
    <source>
        <strain>FGSC A4 / ATCC 38163 / CBS 112.46 / NRRL 194 / M139</strain>
    </source>
</reference>
<reference key="3">
    <citation type="journal article" date="2009" name="Fungal Genet. Biol.">
        <title>The 2008 update of the Aspergillus nidulans genome annotation: a community effort.</title>
        <authorList>
            <person name="Wortman J.R."/>
            <person name="Gilsenan J.M."/>
            <person name="Joardar V."/>
            <person name="Deegan J."/>
            <person name="Clutterbuck J."/>
            <person name="Andersen M.R."/>
            <person name="Archer D."/>
            <person name="Bencina M."/>
            <person name="Braus G."/>
            <person name="Coutinho P."/>
            <person name="von Dohren H."/>
            <person name="Doonan J."/>
            <person name="Driessen A.J."/>
            <person name="Durek P."/>
            <person name="Espeso E."/>
            <person name="Fekete E."/>
            <person name="Flipphi M."/>
            <person name="Estrada C.G."/>
            <person name="Geysens S."/>
            <person name="Goldman G."/>
            <person name="de Groot P.W."/>
            <person name="Hansen K."/>
            <person name="Harris S.D."/>
            <person name="Heinekamp T."/>
            <person name="Helmstaedt K."/>
            <person name="Henrissat B."/>
            <person name="Hofmann G."/>
            <person name="Homan T."/>
            <person name="Horio T."/>
            <person name="Horiuchi H."/>
            <person name="James S."/>
            <person name="Jones M."/>
            <person name="Karaffa L."/>
            <person name="Karanyi Z."/>
            <person name="Kato M."/>
            <person name="Keller N."/>
            <person name="Kelly D.E."/>
            <person name="Kiel J.A."/>
            <person name="Kim J.M."/>
            <person name="van der Klei I.J."/>
            <person name="Klis F.M."/>
            <person name="Kovalchuk A."/>
            <person name="Krasevec N."/>
            <person name="Kubicek C.P."/>
            <person name="Liu B."/>
            <person name="Maccabe A."/>
            <person name="Meyer V."/>
            <person name="Mirabito P."/>
            <person name="Miskei M."/>
            <person name="Mos M."/>
            <person name="Mullins J."/>
            <person name="Nelson D.R."/>
            <person name="Nielsen J."/>
            <person name="Oakley B.R."/>
            <person name="Osmani S.A."/>
            <person name="Pakula T."/>
            <person name="Paszewski A."/>
            <person name="Paulsen I."/>
            <person name="Pilsyk S."/>
            <person name="Pocsi I."/>
            <person name="Punt P.J."/>
            <person name="Ram A.F."/>
            <person name="Ren Q."/>
            <person name="Robellet X."/>
            <person name="Robson G."/>
            <person name="Seiboth B."/>
            <person name="van Solingen P."/>
            <person name="Specht T."/>
            <person name="Sun J."/>
            <person name="Taheri-Talesh N."/>
            <person name="Takeshita N."/>
            <person name="Ussery D."/>
            <person name="vanKuyk P.A."/>
            <person name="Visser H."/>
            <person name="van de Vondervoort P.J."/>
            <person name="de Vries R.P."/>
            <person name="Walton J."/>
            <person name="Xiang X."/>
            <person name="Xiong Y."/>
            <person name="Zeng A.P."/>
            <person name="Brandt B.W."/>
            <person name="Cornell M.J."/>
            <person name="van den Hondel C.A."/>
            <person name="Visser J."/>
            <person name="Oliver S.G."/>
            <person name="Turner G."/>
        </authorList>
    </citation>
    <scope>GENOME REANNOTATION</scope>
    <source>
        <strain>FGSC A4 / ATCC 38163 / CBS 112.46 / NRRL 194 / M139</strain>
    </source>
</reference>
<organism>
    <name type="scientific">Emericella nidulans (strain FGSC A4 / ATCC 38163 / CBS 112.46 / NRRL 194 / M139)</name>
    <name type="common">Aspergillus nidulans</name>
    <dbReference type="NCBI Taxonomy" id="227321"/>
    <lineage>
        <taxon>Eukaryota</taxon>
        <taxon>Fungi</taxon>
        <taxon>Dikarya</taxon>
        <taxon>Ascomycota</taxon>
        <taxon>Pezizomycotina</taxon>
        <taxon>Eurotiomycetes</taxon>
        <taxon>Eurotiomycetidae</taxon>
        <taxon>Eurotiales</taxon>
        <taxon>Aspergillaceae</taxon>
        <taxon>Aspergillus</taxon>
        <taxon>Aspergillus subgen. Nidulantes</taxon>
    </lineage>
</organism>
<accession>Q5B2E8</accession>
<accession>C8VH03</accession>
<accession>Q1HFS7</accession>
<keyword id="KW-0119">Carbohydrate metabolism</keyword>
<keyword id="KW-0136">Cellulose degradation</keyword>
<keyword id="KW-1015">Disulfide bond</keyword>
<keyword id="KW-0326">Glycosidase</keyword>
<keyword id="KW-0378">Hydrolase</keyword>
<keyword id="KW-0624">Polysaccharide degradation</keyword>
<keyword id="KW-1185">Reference proteome</keyword>
<keyword id="KW-0964">Secreted</keyword>
<keyword id="KW-0732">Signal</keyword>
<protein>
    <recommendedName>
        <fullName>1,4-beta-D-glucan cellobiohydrolase C</fullName>
        <ecNumber>3.2.1.91</ecNumber>
    </recommendedName>
    <alternativeName>
        <fullName>Beta-glucancellobiohydrolase C</fullName>
    </alternativeName>
    <alternativeName>
        <fullName>Exocellobiohydrolase C</fullName>
    </alternativeName>
    <alternativeName>
        <fullName>Exoglucanase C</fullName>
    </alternativeName>
</protein>
<comment type="function">
    <text evidence="7">The biological conversion of cellulose to glucose generally requires three types of hydrolytic enzymes: (1) Endoglucanases which cut internal beta-1,4-glucosidic bonds; (2) Exocellobiohydrolases that cut the disaccharide cellobiose from the non-reducing end of the cellulose polymer chain; (3) Beta-1,4-glucosidases which hydrolyze the cellobiose and other short cello-oligosaccharides to glucose. Active against carboxymethylcellulose, beta-glucan and lichenan.</text>
</comment>
<comment type="catalytic activity">
    <reaction>
        <text>Hydrolysis of (1-&gt;4)-beta-D-glucosidic linkages in cellulose and cellotetraose, releasing cellobiose from the non-reducing ends of the chains.</text>
        <dbReference type="EC" id="3.2.1.91"/>
    </reaction>
</comment>
<comment type="biophysicochemical properties">
    <phDependence>
        <text evidence="7">Optimum pH is 5.5.</text>
    </phDependence>
    <temperatureDependence>
        <text evidence="7">Optimum temperature is 57 degrees Celsius.</text>
    </temperatureDependence>
</comment>
<comment type="subcellular location">
    <subcellularLocation>
        <location evidence="1">Secreted</location>
    </subcellularLocation>
</comment>
<comment type="domain">
    <text>Has a modular structure: a carbohydrate-binding module (CBM) at the N-terminus, a linker rich in threonines, and a C-terminal exocellobiohydrolase catalytic module. The genes for catalytic modules and CBMs seem to have evolved separately and have been linked by gene fusion.</text>
</comment>
<comment type="similarity">
    <text evidence="8">Belongs to the glycosyl hydrolase 6 (cellulase B) family.</text>
</comment>
<comment type="sequence caution" evidence="8">
    <conflict type="erroneous gene model prediction">
        <sequence resource="EMBL-CDS" id="CBF82181"/>
    </conflict>
</comment>
<comment type="sequence caution" evidence="8">
    <conflict type="erroneous gene model prediction">
        <sequence resource="EMBL-CDS" id="EAA62442"/>
    </conflict>
</comment>
<name>CBHC_EMENI</name>
<sequence length="455" mass="47624">MHYSASGLALAFLLPAIQAQQTLYGQCGGSGWTGATSCVAGAACSTLNQWYAQCLPAATTTSTTLTTTTSSVTTTSNPGSTTTTSSVTVTATASGNPFSGYQLYVNPYYSSEVQSIAIPSLTGTLSSLAPAATAAAKVPSFVWLDVAAKVPTMATYLADIRSQNAAGANPPIAGQFVVYDLPDRDCAALASNGEFAISDGGVQHYKDYIDSIREILVEYSDVHVILVIEPDSLANLVTNLNVAKCANAQSAYLECTNYAVTQLNLPNVAMYLDAGHAGWLGWPANLQPAANLYAGVYSDAGSPAALRGLATNVANYNAWAIDTCPSYTQGNSVCDEKDYINALAPLLRAQGFDAHFITDTGRNGKQPTGQQAWGDWCNVIGTGFGARPSTNTGDSLLDAFVWVKPGGESDGTSDTSAARYDAHCGYSDALQPAPEAGTWFQAYFVQLLQNANPSF</sequence>
<feature type="signal peptide" evidence="2">
    <location>
        <begin position="1"/>
        <end position="19"/>
    </location>
</feature>
<feature type="chain" id="PRO_0000394053" description="1,4-beta-D-glucan cellobiohydrolase C">
    <location>
        <begin position="20"/>
        <end position="455"/>
    </location>
</feature>
<feature type="domain" description="CBM1" evidence="3">
    <location>
        <begin position="20"/>
        <end position="55"/>
    </location>
</feature>
<feature type="region of interest" description="Thr-rich linker">
    <location>
        <begin position="59"/>
        <end position="92"/>
    </location>
</feature>
<feature type="region of interest" description="Disordered" evidence="6">
    <location>
        <begin position="66"/>
        <end position="86"/>
    </location>
</feature>
<feature type="region of interest" description="Catalytic">
    <location>
        <begin position="93"/>
        <end position="450"/>
    </location>
</feature>
<feature type="active site" evidence="4">
    <location>
        <position position="185"/>
    </location>
</feature>
<feature type="active site" description="Proton donor" evidence="5">
    <location>
        <position position="231"/>
    </location>
</feature>
<feature type="active site" description="Nucleophile" evidence="4">
    <location>
        <position position="410"/>
    </location>
</feature>
<feature type="disulfide bond" evidence="1">
    <location>
        <begin position="27"/>
        <end position="44"/>
    </location>
</feature>
<feature type="disulfide bond" evidence="1">
    <location>
        <begin position="38"/>
        <end position="54"/>
    </location>
</feature>
<feature type="disulfide bond" evidence="1">
    <location>
        <begin position="186"/>
        <end position="245"/>
    </location>
</feature>
<feature type="disulfide bond" evidence="1">
    <location>
        <begin position="377"/>
        <end position="424"/>
    </location>
</feature>
<evidence type="ECO:0000250" key="1"/>
<evidence type="ECO:0000255" key="2"/>
<evidence type="ECO:0000255" key="3">
    <source>
        <dbReference type="PROSITE-ProRule" id="PRU00597"/>
    </source>
</evidence>
<evidence type="ECO:0000255" key="4">
    <source>
        <dbReference type="PROSITE-ProRule" id="PRU10056"/>
    </source>
</evidence>
<evidence type="ECO:0000255" key="5">
    <source>
        <dbReference type="PROSITE-ProRule" id="PRU10057"/>
    </source>
</evidence>
<evidence type="ECO:0000256" key="6">
    <source>
        <dbReference type="SAM" id="MobiDB-lite"/>
    </source>
</evidence>
<evidence type="ECO:0000269" key="7">
    <source>
    </source>
</evidence>
<evidence type="ECO:0000305" key="8"/>